<reference key="1">
    <citation type="journal article" date="1995" name="Science">
        <title>The minimal gene complement of Mycoplasma genitalium.</title>
        <authorList>
            <person name="Fraser C.M."/>
            <person name="Gocayne J.D."/>
            <person name="White O."/>
            <person name="Adams M.D."/>
            <person name="Clayton R.A."/>
            <person name="Fleischmann R.D."/>
            <person name="Bult C.J."/>
            <person name="Kerlavage A.R."/>
            <person name="Sutton G.G."/>
            <person name="Kelley J.M."/>
            <person name="Fritchman J.L."/>
            <person name="Weidman J.F."/>
            <person name="Small K.V."/>
            <person name="Sandusky M."/>
            <person name="Fuhrmann J.L."/>
            <person name="Nguyen D.T."/>
            <person name="Utterback T.R."/>
            <person name="Saudek D.M."/>
            <person name="Phillips C.A."/>
            <person name="Merrick J.M."/>
            <person name="Tomb J.-F."/>
            <person name="Dougherty B.A."/>
            <person name="Bott K.F."/>
            <person name="Hu P.-C."/>
            <person name="Lucier T.S."/>
            <person name="Peterson S.N."/>
            <person name="Smith H.O."/>
            <person name="Hutchison C.A. III"/>
            <person name="Venter J.C."/>
        </authorList>
    </citation>
    <scope>NUCLEOTIDE SEQUENCE [LARGE SCALE GENOMIC DNA]</scope>
    <source>
        <strain>ATCC 33530 / DSM 19775 / NCTC 10195 / G37</strain>
    </source>
</reference>
<reference key="2">
    <citation type="journal article" date="1993" name="J. Bacteriol.">
        <title>A survey of the Mycoplasma genitalium genome by using random sequencing.</title>
        <authorList>
            <person name="Peterson S.N."/>
            <person name="Hu P.-C."/>
            <person name="Bott K.F."/>
            <person name="Hutchison C.A. III"/>
        </authorList>
    </citation>
    <scope>NUCLEOTIDE SEQUENCE [GENOMIC DNA] OF 1-46</scope>
    <source>
        <strain>ATCC 33530 / DSM 19775 / NCTC 10195 / G37</strain>
    </source>
</reference>
<sequence length="550" mass="63397">MDKLRLEVERWLNHPNVNWELKQQIKELNESEIQELFSLEKPLFGTAGVRNKMAPGYHGMNVFSYAYLTQGYVKYIESINEPKRQLRFLVARDTRKNGGLFLETVCDVITSMGHLAYVFDDNQPVSTPLVSHVIFKYGFSGGINITASHNPKDDNGFKVYDHTGAQLLDTQTNQLLSDLPCVTSMLDLELQPNPKFVHTLDNEKVYKNYFRELKKVLVINNNNFKDIKVVFSGLNGTSVCLMQRFLKYLGYSNIISVEEQNWFDENFENAPNLNPEYKDTWILAQKYAKKNNAKLIIMADPDADRFAIAELNNNQWHYFSGNETGAITAYYKLNHKVFKSPYIVSTFVSTYLVNKIAKRYGAFVHRTNVGFKYIGQAINELSQTNELVVGFEEAIGLITSDKLNREKDAYQAAALLLEIARHCKEQNITLLDFYKRILSEFGEYFNLTISHPFKATATDWKEEIKALFNQLINANLTEVAGFKVVKVHLDKQTNILEFGFENGWVKFRFSGTEPKLKFYFDLTNGTREALEKQAKKIYKFFVNLLKLNKA</sequence>
<keyword id="KW-0413">Isomerase</keyword>
<keyword id="KW-0460">Magnesium</keyword>
<keyword id="KW-0479">Metal-binding</keyword>
<keyword id="KW-0597">Phosphoprotein</keyword>
<keyword id="KW-1185">Reference proteome</keyword>
<evidence type="ECO:0000250" key="1"/>
<evidence type="ECO:0000305" key="2"/>
<dbReference type="EC" id="5.4.2.8"/>
<dbReference type="EMBL" id="L43967">
    <property type="protein sequence ID" value="AAC71269.1"/>
    <property type="molecule type" value="Genomic_DNA"/>
</dbReference>
<dbReference type="EMBL" id="U02108">
    <property type="protein sequence ID" value="AAD12379.1"/>
    <property type="status" value="ALT_INIT"/>
    <property type="molecule type" value="Genomic_DNA"/>
</dbReference>
<dbReference type="PIR" id="H64205">
    <property type="entry name" value="H64205"/>
</dbReference>
<dbReference type="RefSeq" id="WP_009885715.1">
    <property type="nucleotide sequence ID" value="NC_000908.2"/>
</dbReference>
<dbReference type="SMR" id="P47299"/>
<dbReference type="FunCoup" id="P47299">
    <property type="interactions" value="168"/>
</dbReference>
<dbReference type="STRING" id="243273.MG_053"/>
<dbReference type="GeneID" id="88282169"/>
<dbReference type="KEGG" id="mge:MG_053"/>
<dbReference type="eggNOG" id="COG1109">
    <property type="taxonomic scope" value="Bacteria"/>
</dbReference>
<dbReference type="HOGENOM" id="CLU_016950_0_0_14"/>
<dbReference type="InParanoid" id="P47299"/>
<dbReference type="OrthoDB" id="9806956at2"/>
<dbReference type="BioCyc" id="MGEN243273:G1GJ2-54-MONOMER"/>
<dbReference type="Proteomes" id="UP000000807">
    <property type="component" value="Chromosome"/>
</dbReference>
<dbReference type="GO" id="GO:0000287">
    <property type="term" value="F:magnesium ion binding"/>
    <property type="evidence" value="ECO:0007669"/>
    <property type="project" value="InterPro"/>
</dbReference>
<dbReference type="GO" id="GO:0004615">
    <property type="term" value="F:phosphomannomutase activity"/>
    <property type="evidence" value="ECO:0007669"/>
    <property type="project" value="UniProtKB-EC"/>
</dbReference>
<dbReference type="GO" id="GO:0008973">
    <property type="term" value="F:phosphopentomutase activity"/>
    <property type="evidence" value="ECO:0000318"/>
    <property type="project" value="GO_Central"/>
</dbReference>
<dbReference type="GO" id="GO:0005975">
    <property type="term" value="P:carbohydrate metabolic process"/>
    <property type="evidence" value="ECO:0007669"/>
    <property type="project" value="InterPro"/>
</dbReference>
<dbReference type="GO" id="GO:0006166">
    <property type="term" value="P:purine ribonucleoside salvage"/>
    <property type="evidence" value="ECO:0000318"/>
    <property type="project" value="GO_Central"/>
</dbReference>
<dbReference type="CDD" id="cd05799">
    <property type="entry name" value="PGM2"/>
    <property type="match status" value="1"/>
</dbReference>
<dbReference type="Gene3D" id="3.40.120.10">
    <property type="entry name" value="Alpha-D-Glucose-1,6-Bisphosphate, subunit A, domain 3"/>
    <property type="match status" value="3"/>
</dbReference>
<dbReference type="Gene3D" id="3.30.310.50">
    <property type="entry name" value="Alpha-D-phosphohexomutase, C-terminal domain"/>
    <property type="match status" value="1"/>
</dbReference>
<dbReference type="InterPro" id="IPR005844">
    <property type="entry name" value="A-D-PHexomutase_a/b/a-I"/>
</dbReference>
<dbReference type="InterPro" id="IPR016055">
    <property type="entry name" value="A-D-PHexomutase_a/b/a-I/II/III"/>
</dbReference>
<dbReference type="InterPro" id="IPR005845">
    <property type="entry name" value="A-D-PHexomutase_a/b/a-II"/>
</dbReference>
<dbReference type="InterPro" id="IPR005846">
    <property type="entry name" value="A-D-PHexomutase_a/b/a-III"/>
</dbReference>
<dbReference type="InterPro" id="IPR005843">
    <property type="entry name" value="A-D-PHexomutase_C"/>
</dbReference>
<dbReference type="InterPro" id="IPR036900">
    <property type="entry name" value="A-D-PHexomutase_C_sf"/>
</dbReference>
<dbReference type="InterPro" id="IPR016066">
    <property type="entry name" value="A-D-PHexomutase_CS"/>
</dbReference>
<dbReference type="InterPro" id="IPR005841">
    <property type="entry name" value="Alpha-D-phosphohexomutase_SF"/>
</dbReference>
<dbReference type="PANTHER" id="PTHR45745:SF1">
    <property type="entry name" value="PHOSPHOGLUCOMUTASE 2B-RELATED"/>
    <property type="match status" value="1"/>
</dbReference>
<dbReference type="PANTHER" id="PTHR45745">
    <property type="entry name" value="PHOSPHOMANNOMUTASE 45A"/>
    <property type="match status" value="1"/>
</dbReference>
<dbReference type="Pfam" id="PF02878">
    <property type="entry name" value="PGM_PMM_I"/>
    <property type="match status" value="1"/>
</dbReference>
<dbReference type="Pfam" id="PF02879">
    <property type="entry name" value="PGM_PMM_II"/>
    <property type="match status" value="1"/>
</dbReference>
<dbReference type="Pfam" id="PF02880">
    <property type="entry name" value="PGM_PMM_III"/>
    <property type="match status" value="1"/>
</dbReference>
<dbReference type="Pfam" id="PF00408">
    <property type="entry name" value="PGM_PMM_IV"/>
    <property type="match status" value="1"/>
</dbReference>
<dbReference type="PRINTS" id="PR00509">
    <property type="entry name" value="PGMPMM"/>
</dbReference>
<dbReference type="SUPFAM" id="SSF55957">
    <property type="entry name" value="Phosphoglucomutase, C-terminal domain"/>
    <property type="match status" value="1"/>
</dbReference>
<dbReference type="SUPFAM" id="SSF53738">
    <property type="entry name" value="Phosphoglucomutase, first 3 domains"/>
    <property type="match status" value="3"/>
</dbReference>
<dbReference type="PROSITE" id="PS00710">
    <property type="entry name" value="PGM_PMM"/>
    <property type="match status" value="1"/>
</dbReference>
<name>MANB_MYCGE</name>
<protein>
    <recommendedName>
        <fullName>Phosphomannomutase</fullName>
        <shortName>PMM</shortName>
        <ecNumber>5.4.2.8</ecNumber>
    </recommendedName>
</protein>
<gene>
    <name type="primary">manB</name>
    <name type="synonym">cpsG</name>
    <name type="ordered locus">MG053</name>
</gene>
<comment type="catalytic activity">
    <reaction>
        <text>alpha-D-mannose 1-phosphate = D-mannose 6-phosphate</text>
        <dbReference type="Rhea" id="RHEA:11140"/>
        <dbReference type="ChEBI" id="CHEBI:58409"/>
        <dbReference type="ChEBI" id="CHEBI:58735"/>
        <dbReference type="EC" id="5.4.2.8"/>
    </reaction>
</comment>
<comment type="cofactor">
    <cofactor evidence="1">
        <name>Mg(2+)</name>
        <dbReference type="ChEBI" id="CHEBI:18420"/>
    </cofactor>
    <text evidence="1">Binds 1 Mg(2+) ion per subunit.</text>
</comment>
<comment type="similarity">
    <text evidence="2">Belongs to the phosphohexose mutase family.</text>
</comment>
<comment type="sequence caution" evidence="2">
    <conflict type="erroneous initiation">
        <sequence resource="EMBL-CDS" id="AAD12379"/>
    </conflict>
</comment>
<proteinExistence type="inferred from homology"/>
<feature type="chain" id="PRO_0000147828" description="Phosphomannomutase">
    <location>
        <begin position="1"/>
        <end position="550"/>
    </location>
</feature>
<feature type="active site" description="Phosphoserine intermediate" evidence="1">
    <location>
        <position position="148"/>
    </location>
</feature>
<feature type="binding site" description="via phosphate group" evidence="1">
    <location>
        <position position="148"/>
    </location>
    <ligand>
        <name>Mg(2+)</name>
        <dbReference type="ChEBI" id="CHEBI:18420"/>
    </ligand>
</feature>
<feature type="binding site" evidence="1">
    <location>
        <position position="300"/>
    </location>
    <ligand>
        <name>Mg(2+)</name>
        <dbReference type="ChEBI" id="CHEBI:18420"/>
    </ligand>
</feature>
<feature type="binding site" evidence="1">
    <location>
        <position position="302"/>
    </location>
    <ligand>
        <name>Mg(2+)</name>
        <dbReference type="ChEBI" id="CHEBI:18420"/>
    </ligand>
</feature>
<feature type="binding site" evidence="1">
    <location>
        <position position="304"/>
    </location>
    <ligand>
        <name>Mg(2+)</name>
        <dbReference type="ChEBI" id="CHEBI:18420"/>
    </ligand>
</feature>
<feature type="sequence conflict" description="In Ref. 2; AAD12379." evidence="2" ref="2">
    <original>PLFGT</original>
    <variation>LYLAL</variation>
    <location>
        <begin position="42"/>
        <end position="46"/>
    </location>
</feature>
<organism>
    <name type="scientific">Mycoplasma genitalium (strain ATCC 33530 / DSM 19775 / NCTC 10195 / G37)</name>
    <name type="common">Mycoplasmoides genitalium</name>
    <dbReference type="NCBI Taxonomy" id="243273"/>
    <lineage>
        <taxon>Bacteria</taxon>
        <taxon>Bacillati</taxon>
        <taxon>Mycoplasmatota</taxon>
        <taxon>Mycoplasmoidales</taxon>
        <taxon>Mycoplasmoidaceae</taxon>
        <taxon>Mycoplasmoides</taxon>
    </lineage>
</organism>
<accession>P47299</accession>
<accession>Q49247</accession>